<accession>P34328</accession>
<proteinExistence type="inferred from homology"/>
<evidence type="ECO:0000255" key="1">
    <source>
        <dbReference type="PROSITE-ProRule" id="PRU00285"/>
    </source>
</evidence>
<sequence length="110" mass="12265">MSAIEVTADAASTWDWPLQHNDGVVKVHNTKEKFEVGLDVQFFTPKEIEVKVSGQELLIHCRHETRSDNHGTVAREINRAYKLPDDVDVSTVKSHLATRGVLTITASKKA</sequence>
<comment type="similarity">
    <text evidence="1">Belongs to the small heat shock protein (HSP20) family.</text>
</comment>
<name>HSP10_CAEEL</name>
<reference key="1">
    <citation type="journal article" date="1994" name="Nature">
        <title>2.2 Mb of contiguous nucleotide sequence from chromosome III of C. elegans.</title>
        <authorList>
            <person name="Wilson R."/>
            <person name="Ainscough R."/>
            <person name="Anderson K."/>
            <person name="Baynes C."/>
            <person name="Berks M."/>
            <person name="Bonfield J."/>
            <person name="Burton J."/>
            <person name="Connell M."/>
            <person name="Copsey T."/>
            <person name="Cooper J."/>
            <person name="Coulson A."/>
            <person name="Craxton M."/>
            <person name="Dear S."/>
            <person name="Du Z."/>
            <person name="Durbin R."/>
            <person name="Favello A."/>
            <person name="Fraser A."/>
            <person name="Fulton L."/>
            <person name="Gardner A."/>
            <person name="Green P."/>
            <person name="Hawkins T."/>
            <person name="Hillier L."/>
            <person name="Jier M."/>
            <person name="Johnston L."/>
            <person name="Jones M."/>
            <person name="Kershaw J."/>
            <person name="Kirsten J."/>
            <person name="Laisster N."/>
            <person name="Latreille P."/>
            <person name="Lightning J."/>
            <person name="Lloyd C."/>
            <person name="Mortimore B."/>
            <person name="O'Callaghan M."/>
            <person name="Parsons J."/>
            <person name="Percy C."/>
            <person name="Rifken L."/>
            <person name="Roopra A."/>
            <person name="Saunders D."/>
            <person name="Shownkeen R."/>
            <person name="Sims M."/>
            <person name="Smaldon N."/>
            <person name="Smith A."/>
            <person name="Smith M."/>
            <person name="Sonnhammer E."/>
            <person name="Staden R."/>
            <person name="Sulston J."/>
            <person name="Thierry-Mieg J."/>
            <person name="Thomas K."/>
            <person name="Vaudin M."/>
            <person name="Vaughan K."/>
            <person name="Waterston R."/>
            <person name="Watson A."/>
            <person name="Weinstock L."/>
            <person name="Wilkinson-Sproat J."/>
            <person name="Wohldman P."/>
        </authorList>
    </citation>
    <scope>NUCLEOTIDE SEQUENCE [LARGE SCALE GENOMIC DNA]</scope>
    <source>
        <strain>Bristol N2</strain>
    </source>
</reference>
<reference key="2">
    <citation type="journal article" date="1998" name="Science">
        <title>Genome sequence of the nematode C. elegans: a platform for investigating biology.</title>
        <authorList>
            <consortium name="The C. elegans sequencing consortium"/>
        </authorList>
    </citation>
    <scope>NUCLEOTIDE SEQUENCE [LARGE SCALE GENOMIC DNA]</scope>
    <source>
        <strain>Bristol N2</strain>
    </source>
</reference>
<protein>
    <recommendedName>
        <fullName>Heat shock protein Hsp-12.2</fullName>
    </recommendedName>
</protein>
<dbReference type="EMBL" id="FO080531">
    <property type="protein sequence ID" value="CCD64435.1"/>
    <property type="molecule type" value="Genomic_DNA"/>
</dbReference>
<dbReference type="PIR" id="S44755">
    <property type="entry name" value="S44755"/>
</dbReference>
<dbReference type="RefSeq" id="NP_498776.1">
    <property type="nucleotide sequence ID" value="NM_066375.8"/>
</dbReference>
<dbReference type="SMR" id="P34328"/>
<dbReference type="BioGRID" id="41354">
    <property type="interactions" value="14"/>
</dbReference>
<dbReference type="DIP" id="DIP-25566N"/>
<dbReference type="FunCoup" id="P34328">
    <property type="interactions" value="148"/>
</dbReference>
<dbReference type="IntAct" id="P34328">
    <property type="interactions" value="3"/>
</dbReference>
<dbReference type="STRING" id="6239.C14B9.1.2"/>
<dbReference type="PaxDb" id="6239-C14B9.1"/>
<dbReference type="PeptideAtlas" id="P34328"/>
<dbReference type="EnsemblMetazoa" id="C14B9.1.1">
    <property type="protein sequence ID" value="C14B9.1.1"/>
    <property type="gene ID" value="WBGene00002011"/>
</dbReference>
<dbReference type="GeneID" id="176148"/>
<dbReference type="KEGG" id="cel:CELE_C14B9.1"/>
<dbReference type="UCSC" id="C14B9.1">
    <property type="organism name" value="c. elegans"/>
</dbReference>
<dbReference type="AGR" id="WB:WBGene00002011"/>
<dbReference type="CTD" id="176148"/>
<dbReference type="WormBase" id="C14B9.1">
    <property type="protein sequence ID" value="CE00072"/>
    <property type="gene ID" value="WBGene00002011"/>
    <property type="gene designation" value="hsp-12.2"/>
</dbReference>
<dbReference type="eggNOG" id="KOG3591">
    <property type="taxonomic scope" value="Eukaryota"/>
</dbReference>
<dbReference type="GeneTree" id="ENSGT00970000196358"/>
<dbReference type="HOGENOM" id="CLU_095001_6_0_1"/>
<dbReference type="InParanoid" id="P34328"/>
<dbReference type="OMA" id="VKVCGQD"/>
<dbReference type="OrthoDB" id="1431247at2759"/>
<dbReference type="PhylomeDB" id="P34328"/>
<dbReference type="Reactome" id="R-CEL-3371571">
    <property type="pathway name" value="HSF1-dependent transactivation"/>
</dbReference>
<dbReference type="Reactome" id="R-CEL-4420097">
    <property type="pathway name" value="VEGFA-VEGFR2 Pathway"/>
</dbReference>
<dbReference type="PRO" id="PR:P34328"/>
<dbReference type="Proteomes" id="UP000001940">
    <property type="component" value="Chromosome III"/>
</dbReference>
<dbReference type="Bgee" id="WBGene00002011">
    <property type="expression patterns" value="Expressed in pharyngeal muscle cell (C elegans) and 3 other cell types or tissues"/>
</dbReference>
<dbReference type="GO" id="GO:0005737">
    <property type="term" value="C:cytoplasm"/>
    <property type="evidence" value="ECO:0000314"/>
    <property type="project" value="WormBase"/>
</dbReference>
<dbReference type="GO" id="GO:0005634">
    <property type="term" value="C:nucleus"/>
    <property type="evidence" value="ECO:0000318"/>
    <property type="project" value="GO_Central"/>
</dbReference>
<dbReference type="GO" id="GO:0031072">
    <property type="term" value="F:heat shock protein binding"/>
    <property type="evidence" value="ECO:0000353"/>
    <property type="project" value="WormBase"/>
</dbReference>
<dbReference type="GO" id="GO:0042026">
    <property type="term" value="P:protein refolding"/>
    <property type="evidence" value="ECO:0000318"/>
    <property type="project" value="GO_Central"/>
</dbReference>
<dbReference type="GO" id="GO:0009408">
    <property type="term" value="P:response to heat"/>
    <property type="evidence" value="ECO:0000318"/>
    <property type="project" value="GO_Central"/>
</dbReference>
<dbReference type="CDD" id="cd06526">
    <property type="entry name" value="metazoan_ACD"/>
    <property type="match status" value="1"/>
</dbReference>
<dbReference type="FunFam" id="2.60.40.790:FF:000036">
    <property type="entry name" value="Heat Shock Protein"/>
    <property type="match status" value="1"/>
</dbReference>
<dbReference type="Gene3D" id="2.60.40.790">
    <property type="match status" value="1"/>
</dbReference>
<dbReference type="InterPro" id="IPR002068">
    <property type="entry name" value="A-crystallin/Hsp20_dom"/>
</dbReference>
<dbReference type="InterPro" id="IPR001436">
    <property type="entry name" value="Alpha-crystallin/sHSP_animal"/>
</dbReference>
<dbReference type="InterPro" id="IPR008978">
    <property type="entry name" value="HSP20-like_chaperone"/>
</dbReference>
<dbReference type="PANTHER" id="PTHR45640:SF35">
    <property type="entry name" value="HEAT SHOCK PROTEIN HSP-12.2"/>
    <property type="match status" value="1"/>
</dbReference>
<dbReference type="PANTHER" id="PTHR45640">
    <property type="entry name" value="HEAT SHOCK PROTEIN HSP-12.2-RELATED"/>
    <property type="match status" value="1"/>
</dbReference>
<dbReference type="Pfam" id="PF00011">
    <property type="entry name" value="HSP20"/>
    <property type="match status" value="1"/>
</dbReference>
<dbReference type="PRINTS" id="PR00299">
    <property type="entry name" value="ACRYSTALLIN"/>
</dbReference>
<dbReference type="SUPFAM" id="SSF49764">
    <property type="entry name" value="HSP20-like chaperones"/>
    <property type="match status" value="1"/>
</dbReference>
<dbReference type="PROSITE" id="PS01031">
    <property type="entry name" value="SHSP"/>
    <property type="match status" value="1"/>
</dbReference>
<organism>
    <name type="scientific">Caenorhabditis elegans</name>
    <dbReference type="NCBI Taxonomy" id="6239"/>
    <lineage>
        <taxon>Eukaryota</taxon>
        <taxon>Metazoa</taxon>
        <taxon>Ecdysozoa</taxon>
        <taxon>Nematoda</taxon>
        <taxon>Chromadorea</taxon>
        <taxon>Rhabditida</taxon>
        <taxon>Rhabditina</taxon>
        <taxon>Rhabditomorpha</taxon>
        <taxon>Rhabditoidea</taxon>
        <taxon>Rhabditidae</taxon>
        <taxon>Peloderinae</taxon>
        <taxon>Caenorhabditis</taxon>
    </lineage>
</organism>
<feature type="chain" id="PRO_0000125957" description="Heat shock protein Hsp-12.2">
    <location>
        <begin position="1"/>
        <end position="110"/>
    </location>
</feature>
<feature type="domain" description="sHSP" evidence="1">
    <location>
        <begin position="15"/>
        <end position="110"/>
    </location>
</feature>
<gene>
    <name type="primary">hsp-12.2</name>
    <name type="synonym">hsp12-2</name>
    <name type="ORF">C14B9.1</name>
</gene>
<keyword id="KW-1185">Reference proteome</keyword>
<keyword id="KW-0346">Stress response</keyword>